<feature type="chain" id="PRO_0000192475" description="Ribosome association toxin RatA">
    <location>
        <begin position="1"/>
        <end position="158"/>
    </location>
</feature>
<proteinExistence type="inferred from homology"/>
<organism>
    <name type="scientific">Shigella flexneri</name>
    <dbReference type="NCBI Taxonomy" id="623"/>
    <lineage>
        <taxon>Bacteria</taxon>
        <taxon>Pseudomonadati</taxon>
        <taxon>Pseudomonadota</taxon>
        <taxon>Gammaproteobacteria</taxon>
        <taxon>Enterobacterales</taxon>
        <taxon>Enterobacteriaceae</taxon>
        <taxon>Shigella</taxon>
    </lineage>
</organism>
<dbReference type="EMBL" id="AE005674">
    <property type="protein sequence ID" value="AAN44173.2"/>
    <property type="status" value="ALT_INIT"/>
    <property type="molecule type" value="Genomic_DNA"/>
</dbReference>
<dbReference type="EMBL" id="AE014073">
    <property type="protein sequence ID" value="AAP17998.1"/>
    <property type="status" value="ALT_INIT"/>
    <property type="molecule type" value="Genomic_DNA"/>
</dbReference>
<dbReference type="RefSeq" id="NP_708466.2">
    <property type="nucleotide sequence ID" value="NC_004337.2"/>
</dbReference>
<dbReference type="SMR" id="P0AGL6"/>
<dbReference type="STRING" id="198214.SF2678"/>
<dbReference type="PaxDb" id="198214-SF2678"/>
<dbReference type="GeneID" id="1025684"/>
<dbReference type="KEGG" id="sfl:SF2678"/>
<dbReference type="KEGG" id="sfx:S2856"/>
<dbReference type="PATRIC" id="fig|198214.7.peg.3188"/>
<dbReference type="HOGENOM" id="CLU_079653_3_1_6"/>
<dbReference type="Proteomes" id="UP000001006">
    <property type="component" value="Chromosome"/>
</dbReference>
<dbReference type="Proteomes" id="UP000002673">
    <property type="component" value="Chromosome"/>
</dbReference>
<dbReference type="GO" id="GO:0048039">
    <property type="term" value="F:ubiquinone binding"/>
    <property type="evidence" value="ECO:0007669"/>
    <property type="project" value="InterPro"/>
</dbReference>
<dbReference type="GO" id="GO:0045333">
    <property type="term" value="P:cellular respiration"/>
    <property type="evidence" value="ECO:0007669"/>
    <property type="project" value="InterPro"/>
</dbReference>
<dbReference type="CDD" id="cd07813">
    <property type="entry name" value="COQ10p_like"/>
    <property type="match status" value="1"/>
</dbReference>
<dbReference type="FunFam" id="3.30.530.20:FF:000005">
    <property type="entry name" value="Type II toxin-antitoxin system toxin RatA"/>
    <property type="match status" value="1"/>
</dbReference>
<dbReference type="Gene3D" id="3.30.530.20">
    <property type="match status" value="1"/>
</dbReference>
<dbReference type="InterPro" id="IPR044996">
    <property type="entry name" value="COQ10-like"/>
</dbReference>
<dbReference type="InterPro" id="IPR005031">
    <property type="entry name" value="COQ10_START"/>
</dbReference>
<dbReference type="InterPro" id="IPR023393">
    <property type="entry name" value="START-like_dom_sf"/>
</dbReference>
<dbReference type="NCBIfam" id="NF007999">
    <property type="entry name" value="PRK10724.1"/>
    <property type="match status" value="1"/>
</dbReference>
<dbReference type="PANTHER" id="PTHR12901:SF10">
    <property type="entry name" value="COENZYME Q-BINDING PROTEIN COQ10, MITOCHONDRIAL"/>
    <property type="match status" value="1"/>
</dbReference>
<dbReference type="PANTHER" id="PTHR12901">
    <property type="entry name" value="SPERM PROTEIN HOMOLOG"/>
    <property type="match status" value="1"/>
</dbReference>
<dbReference type="Pfam" id="PF03364">
    <property type="entry name" value="Polyketide_cyc"/>
    <property type="match status" value="1"/>
</dbReference>
<dbReference type="SUPFAM" id="SSF55961">
    <property type="entry name" value="Bet v1-like"/>
    <property type="match status" value="1"/>
</dbReference>
<evidence type="ECO:0000250" key="1"/>
<evidence type="ECO:0000305" key="2"/>
<name>RATA_SHIFL</name>
<sequence length="158" mass="17727">MILFVGFLLMEIVMPQISRTALVPYSAEQMYQLVNDVQSYPQFLPGCTGSRILESTPGQMTAAVDVSKAGISKTFTTRNQLTSNQSILMNLVDGPFKKLIGGWKFTPLSQEACRIEFHLDFEFTNKLIELAFGRVFKELAANMVQAFTVRAKEVYSAR</sequence>
<gene>
    <name type="primary">ratA</name>
    <name type="synonym">yfjG</name>
    <name type="ordered locus">SF2678</name>
    <name type="ordered locus">S2856</name>
</gene>
<comment type="function">
    <text evidence="1">Toxic component of a type II toxin-antitoxin (TA) system. Binds to 50S ribosomal subunits, preventing them from associating with 30S subunits to form 70S ribosomes. Its antitoxin is unknown (By similarity).</text>
</comment>
<comment type="similarity">
    <text evidence="2">Belongs to the ribosome association toxin RatA family.</text>
</comment>
<comment type="sequence caution" evidence="2">
    <conflict type="erroneous initiation">
        <sequence resource="EMBL-CDS" id="AAN44173"/>
    </conflict>
    <text>Truncated N-terminus.</text>
</comment>
<comment type="sequence caution" evidence="2">
    <conflict type="erroneous initiation">
        <sequence resource="EMBL-CDS" id="AAP17998"/>
    </conflict>
    <text>Truncated N-terminus.</text>
</comment>
<keyword id="KW-1185">Reference proteome</keyword>
<keyword id="KW-1277">Toxin-antitoxin system</keyword>
<accession>P0AGL6</accession>
<accession>P52121</accession>
<protein>
    <recommendedName>
        <fullName>Ribosome association toxin RatA</fullName>
    </recommendedName>
</protein>
<reference key="1">
    <citation type="journal article" date="2002" name="Nucleic Acids Res.">
        <title>Genome sequence of Shigella flexneri 2a: insights into pathogenicity through comparison with genomes of Escherichia coli K12 and O157.</title>
        <authorList>
            <person name="Jin Q."/>
            <person name="Yuan Z."/>
            <person name="Xu J."/>
            <person name="Wang Y."/>
            <person name="Shen Y."/>
            <person name="Lu W."/>
            <person name="Wang J."/>
            <person name="Liu H."/>
            <person name="Yang J."/>
            <person name="Yang F."/>
            <person name="Zhang X."/>
            <person name="Zhang J."/>
            <person name="Yang G."/>
            <person name="Wu H."/>
            <person name="Qu D."/>
            <person name="Dong J."/>
            <person name="Sun L."/>
            <person name="Xue Y."/>
            <person name="Zhao A."/>
            <person name="Gao Y."/>
            <person name="Zhu J."/>
            <person name="Kan B."/>
            <person name="Ding K."/>
            <person name="Chen S."/>
            <person name="Cheng H."/>
            <person name="Yao Z."/>
            <person name="He B."/>
            <person name="Chen R."/>
            <person name="Ma D."/>
            <person name="Qiang B."/>
            <person name="Wen Y."/>
            <person name="Hou Y."/>
            <person name="Yu J."/>
        </authorList>
    </citation>
    <scope>NUCLEOTIDE SEQUENCE [LARGE SCALE GENOMIC DNA]</scope>
    <source>
        <strain>301 / Serotype 2a</strain>
    </source>
</reference>
<reference key="2">
    <citation type="journal article" date="2003" name="Infect. Immun.">
        <title>Complete genome sequence and comparative genomics of Shigella flexneri serotype 2a strain 2457T.</title>
        <authorList>
            <person name="Wei J."/>
            <person name="Goldberg M.B."/>
            <person name="Burland V."/>
            <person name="Venkatesan M.M."/>
            <person name="Deng W."/>
            <person name="Fournier G."/>
            <person name="Mayhew G.F."/>
            <person name="Plunkett G. III"/>
            <person name="Rose D.J."/>
            <person name="Darling A."/>
            <person name="Mau B."/>
            <person name="Perna N.T."/>
            <person name="Payne S.M."/>
            <person name="Runyen-Janecky L.J."/>
            <person name="Zhou S."/>
            <person name="Schwartz D.C."/>
            <person name="Blattner F.R."/>
        </authorList>
    </citation>
    <scope>NUCLEOTIDE SEQUENCE [LARGE SCALE GENOMIC DNA]</scope>
    <source>
        <strain>ATCC 700930 / 2457T / Serotype 2a</strain>
    </source>
</reference>